<gene>
    <name evidence="1" type="primary">rplK</name>
    <name type="ordered locus">PSEEN0478</name>
</gene>
<feature type="chain" id="PRO_1000046244" description="Large ribosomal subunit protein uL11">
    <location>
        <begin position="1"/>
        <end position="143"/>
    </location>
</feature>
<comment type="function">
    <text evidence="1">Forms part of the ribosomal stalk which helps the ribosome interact with GTP-bound translation factors.</text>
</comment>
<comment type="subunit">
    <text evidence="1">Part of the ribosomal stalk of the 50S ribosomal subunit. Interacts with L10 and the large rRNA to form the base of the stalk. L10 forms an elongated spine to which L12 dimers bind in a sequential fashion forming a multimeric L10(L12)X complex.</text>
</comment>
<comment type="PTM">
    <text evidence="1">One or more lysine residues are methylated.</text>
</comment>
<comment type="similarity">
    <text evidence="1">Belongs to the universal ribosomal protein uL11 family.</text>
</comment>
<dbReference type="EMBL" id="CT573326">
    <property type="protein sequence ID" value="CAK13425.1"/>
    <property type="molecule type" value="Genomic_DNA"/>
</dbReference>
<dbReference type="RefSeq" id="WP_011531881.1">
    <property type="nucleotide sequence ID" value="NC_008027.1"/>
</dbReference>
<dbReference type="SMR" id="Q1IFX7"/>
<dbReference type="STRING" id="384676.PSEEN0478"/>
<dbReference type="GeneID" id="93675511"/>
<dbReference type="KEGG" id="pen:PSEEN0478"/>
<dbReference type="eggNOG" id="COG0080">
    <property type="taxonomic scope" value="Bacteria"/>
</dbReference>
<dbReference type="HOGENOM" id="CLU_074237_2_0_6"/>
<dbReference type="OrthoDB" id="9802408at2"/>
<dbReference type="Proteomes" id="UP000000658">
    <property type="component" value="Chromosome"/>
</dbReference>
<dbReference type="GO" id="GO:0022625">
    <property type="term" value="C:cytosolic large ribosomal subunit"/>
    <property type="evidence" value="ECO:0007669"/>
    <property type="project" value="TreeGrafter"/>
</dbReference>
<dbReference type="GO" id="GO:0070180">
    <property type="term" value="F:large ribosomal subunit rRNA binding"/>
    <property type="evidence" value="ECO:0007669"/>
    <property type="project" value="UniProtKB-UniRule"/>
</dbReference>
<dbReference type="GO" id="GO:0003735">
    <property type="term" value="F:structural constituent of ribosome"/>
    <property type="evidence" value="ECO:0007669"/>
    <property type="project" value="InterPro"/>
</dbReference>
<dbReference type="GO" id="GO:0006412">
    <property type="term" value="P:translation"/>
    <property type="evidence" value="ECO:0007669"/>
    <property type="project" value="UniProtKB-UniRule"/>
</dbReference>
<dbReference type="CDD" id="cd00349">
    <property type="entry name" value="Ribosomal_L11"/>
    <property type="match status" value="1"/>
</dbReference>
<dbReference type="FunFam" id="1.10.10.250:FF:000001">
    <property type="entry name" value="50S ribosomal protein L11"/>
    <property type="match status" value="1"/>
</dbReference>
<dbReference type="FunFam" id="3.30.1550.10:FF:000001">
    <property type="entry name" value="50S ribosomal protein L11"/>
    <property type="match status" value="1"/>
</dbReference>
<dbReference type="Gene3D" id="1.10.10.250">
    <property type="entry name" value="Ribosomal protein L11, C-terminal domain"/>
    <property type="match status" value="1"/>
</dbReference>
<dbReference type="Gene3D" id="3.30.1550.10">
    <property type="entry name" value="Ribosomal protein L11/L12, N-terminal domain"/>
    <property type="match status" value="1"/>
</dbReference>
<dbReference type="HAMAP" id="MF_00736">
    <property type="entry name" value="Ribosomal_uL11"/>
    <property type="match status" value="1"/>
</dbReference>
<dbReference type="InterPro" id="IPR000911">
    <property type="entry name" value="Ribosomal_uL11"/>
</dbReference>
<dbReference type="InterPro" id="IPR006519">
    <property type="entry name" value="Ribosomal_uL11_bac-typ"/>
</dbReference>
<dbReference type="InterPro" id="IPR020783">
    <property type="entry name" value="Ribosomal_uL11_C"/>
</dbReference>
<dbReference type="InterPro" id="IPR036769">
    <property type="entry name" value="Ribosomal_uL11_C_sf"/>
</dbReference>
<dbReference type="InterPro" id="IPR020785">
    <property type="entry name" value="Ribosomal_uL11_CS"/>
</dbReference>
<dbReference type="InterPro" id="IPR020784">
    <property type="entry name" value="Ribosomal_uL11_N"/>
</dbReference>
<dbReference type="InterPro" id="IPR036796">
    <property type="entry name" value="Ribosomal_uL11_N_sf"/>
</dbReference>
<dbReference type="NCBIfam" id="TIGR01632">
    <property type="entry name" value="L11_bact"/>
    <property type="match status" value="1"/>
</dbReference>
<dbReference type="PANTHER" id="PTHR11661">
    <property type="entry name" value="60S RIBOSOMAL PROTEIN L12"/>
    <property type="match status" value="1"/>
</dbReference>
<dbReference type="PANTHER" id="PTHR11661:SF1">
    <property type="entry name" value="LARGE RIBOSOMAL SUBUNIT PROTEIN UL11M"/>
    <property type="match status" value="1"/>
</dbReference>
<dbReference type="Pfam" id="PF00298">
    <property type="entry name" value="Ribosomal_L11"/>
    <property type="match status" value="1"/>
</dbReference>
<dbReference type="Pfam" id="PF03946">
    <property type="entry name" value="Ribosomal_L11_N"/>
    <property type="match status" value="1"/>
</dbReference>
<dbReference type="SMART" id="SM00649">
    <property type="entry name" value="RL11"/>
    <property type="match status" value="1"/>
</dbReference>
<dbReference type="SUPFAM" id="SSF54747">
    <property type="entry name" value="Ribosomal L11/L12e N-terminal domain"/>
    <property type="match status" value="1"/>
</dbReference>
<dbReference type="SUPFAM" id="SSF46906">
    <property type="entry name" value="Ribosomal protein L11, C-terminal domain"/>
    <property type="match status" value="1"/>
</dbReference>
<dbReference type="PROSITE" id="PS00359">
    <property type="entry name" value="RIBOSOMAL_L11"/>
    <property type="match status" value="1"/>
</dbReference>
<proteinExistence type="inferred from homology"/>
<accession>Q1IFX7</accession>
<keyword id="KW-0488">Methylation</keyword>
<keyword id="KW-0687">Ribonucleoprotein</keyword>
<keyword id="KW-0689">Ribosomal protein</keyword>
<keyword id="KW-0694">RNA-binding</keyword>
<keyword id="KW-0699">rRNA-binding</keyword>
<name>RL11_PSEE4</name>
<reference key="1">
    <citation type="journal article" date="2006" name="Nat. Biotechnol.">
        <title>Complete genome sequence of the entomopathogenic and metabolically versatile soil bacterium Pseudomonas entomophila.</title>
        <authorList>
            <person name="Vodovar N."/>
            <person name="Vallenet D."/>
            <person name="Cruveiller S."/>
            <person name="Rouy Z."/>
            <person name="Barbe V."/>
            <person name="Acosta C."/>
            <person name="Cattolico L."/>
            <person name="Jubin C."/>
            <person name="Lajus A."/>
            <person name="Segurens B."/>
            <person name="Vacherie B."/>
            <person name="Wincker P."/>
            <person name="Weissenbach J."/>
            <person name="Lemaitre B."/>
            <person name="Medigue C."/>
            <person name="Boccard F."/>
        </authorList>
    </citation>
    <scope>NUCLEOTIDE SEQUENCE [LARGE SCALE GENOMIC DNA]</scope>
    <source>
        <strain>L48</strain>
    </source>
</reference>
<organism>
    <name type="scientific">Pseudomonas entomophila (strain L48)</name>
    <dbReference type="NCBI Taxonomy" id="384676"/>
    <lineage>
        <taxon>Bacteria</taxon>
        <taxon>Pseudomonadati</taxon>
        <taxon>Pseudomonadota</taxon>
        <taxon>Gammaproteobacteria</taxon>
        <taxon>Pseudomonadales</taxon>
        <taxon>Pseudomonadaceae</taxon>
        <taxon>Pseudomonas</taxon>
    </lineage>
</organism>
<sequence>MAKKIQAYIKLQVKAGQANPSPPVGPALGQHGVNIMEFCKAFNARTQGQEPGLPTPVIITVYSDRSFTFETKSTPASVLLKKAAGLTSGSARPNTVKVGTVTRAQLEDIAKAKQADLTAADLDAAVRTIAGSARSMGLNVEGV</sequence>
<protein>
    <recommendedName>
        <fullName evidence="1">Large ribosomal subunit protein uL11</fullName>
    </recommendedName>
    <alternativeName>
        <fullName evidence="2">50S ribosomal protein L11</fullName>
    </alternativeName>
</protein>
<evidence type="ECO:0000255" key="1">
    <source>
        <dbReference type="HAMAP-Rule" id="MF_00736"/>
    </source>
</evidence>
<evidence type="ECO:0000305" key="2"/>